<protein>
    <recommendedName>
        <fullName evidence="2">Elongation factor Tu</fullName>
        <shortName evidence="2">EF-Tu</shortName>
        <ecNumber evidence="2">3.6.5.3</ecNumber>
    </recommendedName>
</protein>
<reference key="1">
    <citation type="journal article" date="2007" name="Curr. Biol.">
        <title>Reduced genome of the thioautotrophic intracellular symbiont in a deep-sea clam, Calyptogena okutanii.</title>
        <authorList>
            <person name="Kuwahara H."/>
            <person name="Yoshida T."/>
            <person name="Takaki Y."/>
            <person name="Shimamura S."/>
            <person name="Nishi S."/>
            <person name="Harada M."/>
            <person name="Matsuyama K."/>
            <person name="Takishita K."/>
            <person name="Kawato M."/>
            <person name="Uematsu K."/>
            <person name="Fujiwara Y."/>
            <person name="Sato T."/>
            <person name="Kato C."/>
            <person name="Kitagawa M."/>
            <person name="Kato I."/>
            <person name="Maruyama T."/>
        </authorList>
    </citation>
    <scope>NUCLEOTIDE SEQUENCE [LARGE SCALE GENOMIC DNA]</scope>
    <source>
        <strain>HA</strain>
    </source>
</reference>
<dbReference type="EC" id="3.6.5.3" evidence="2"/>
<dbReference type="EMBL" id="AP009247">
    <property type="protein sequence ID" value="BAF61297.1"/>
    <property type="molecule type" value="Genomic_DNA"/>
</dbReference>
<dbReference type="EMBL" id="AP009247">
    <property type="protein sequence ID" value="BAF61855.1"/>
    <property type="molecule type" value="Genomic_DNA"/>
</dbReference>
<dbReference type="RefSeq" id="WP_011929567.1">
    <property type="nucleotide sequence ID" value="NC_009465.1"/>
</dbReference>
<dbReference type="SMR" id="A5CW32"/>
<dbReference type="STRING" id="412965.COSY_0167"/>
<dbReference type="KEGG" id="vok:COSY_0167"/>
<dbReference type="KEGG" id="vok:COSY_0744"/>
<dbReference type="eggNOG" id="COG0050">
    <property type="taxonomic scope" value="Bacteria"/>
</dbReference>
<dbReference type="HOGENOM" id="CLU_007265_0_2_6"/>
<dbReference type="OrthoDB" id="9803139at2"/>
<dbReference type="Proteomes" id="UP000000247">
    <property type="component" value="Chromosome"/>
</dbReference>
<dbReference type="GO" id="GO:0005737">
    <property type="term" value="C:cytoplasm"/>
    <property type="evidence" value="ECO:0007669"/>
    <property type="project" value="UniProtKB-SubCell"/>
</dbReference>
<dbReference type="GO" id="GO:0005525">
    <property type="term" value="F:GTP binding"/>
    <property type="evidence" value="ECO:0007669"/>
    <property type="project" value="UniProtKB-UniRule"/>
</dbReference>
<dbReference type="GO" id="GO:0003924">
    <property type="term" value="F:GTPase activity"/>
    <property type="evidence" value="ECO:0007669"/>
    <property type="project" value="InterPro"/>
</dbReference>
<dbReference type="GO" id="GO:0097216">
    <property type="term" value="F:guanosine tetraphosphate binding"/>
    <property type="evidence" value="ECO:0007669"/>
    <property type="project" value="UniProtKB-ARBA"/>
</dbReference>
<dbReference type="GO" id="GO:0003746">
    <property type="term" value="F:translation elongation factor activity"/>
    <property type="evidence" value="ECO:0007669"/>
    <property type="project" value="UniProtKB-UniRule"/>
</dbReference>
<dbReference type="CDD" id="cd01884">
    <property type="entry name" value="EF_Tu"/>
    <property type="match status" value="1"/>
</dbReference>
<dbReference type="CDD" id="cd03697">
    <property type="entry name" value="EFTU_II"/>
    <property type="match status" value="1"/>
</dbReference>
<dbReference type="CDD" id="cd03707">
    <property type="entry name" value="EFTU_III"/>
    <property type="match status" value="1"/>
</dbReference>
<dbReference type="FunFam" id="2.40.30.10:FF:000001">
    <property type="entry name" value="Elongation factor Tu"/>
    <property type="match status" value="1"/>
</dbReference>
<dbReference type="FunFam" id="3.40.50.300:FF:000003">
    <property type="entry name" value="Elongation factor Tu"/>
    <property type="match status" value="1"/>
</dbReference>
<dbReference type="Gene3D" id="3.40.50.300">
    <property type="entry name" value="P-loop containing nucleotide triphosphate hydrolases"/>
    <property type="match status" value="1"/>
</dbReference>
<dbReference type="Gene3D" id="2.40.30.10">
    <property type="entry name" value="Translation factors"/>
    <property type="match status" value="2"/>
</dbReference>
<dbReference type="HAMAP" id="MF_00118_B">
    <property type="entry name" value="EF_Tu_B"/>
    <property type="match status" value="1"/>
</dbReference>
<dbReference type="InterPro" id="IPR041709">
    <property type="entry name" value="EF-Tu_GTP-bd"/>
</dbReference>
<dbReference type="InterPro" id="IPR050055">
    <property type="entry name" value="EF-Tu_GTPase"/>
</dbReference>
<dbReference type="InterPro" id="IPR004161">
    <property type="entry name" value="EFTu-like_2"/>
</dbReference>
<dbReference type="InterPro" id="IPR033720">
    <property type="entry name" value="EFTU_2"/>
</dbReference>
<dbReference type="InterPro" id="IPR031157">
    <property type="entry name" value="G_TR_CS"/>
</dbReference>
<dbReference type="InterPro" id="IPR027417">
    <property type="entry name" value="P-loop_NTPase"/>
</dbReference>
<dbReference type="InterPro" id="IPR005225">
    <property type="entry name" value="Small_GTP-bd"/>
</dbReference>
<dbReference type="InterPro" id="IPR000795">
    <property type="entry name" value="T_Tr_GTP-bd_dom"/>
</dbReference>
<dbReference type="InterPro" id="IPR009000">
    <property type="entry name" value="Transl_B-barrel_sf"/>
</dbReference>
<dbReference type="InterPro" id="IPR009001">
    <property type="entry name" value="Transl_elong_EF1A/Init_IF2_C"/>
</dbReference>
<dbReference type="InterPro" id="IPR004541">
    <property type="entry name" value="Transl_elong_EFTu/EF1A_bac/org"/>
</dbReference>
<dbReference type="InterPro" id="IPR004160">
    <property type="entry name" value="Transl_elong_EFTu/EF1A_C"/>
</dbReference>
<dbReference type="NCBIfam" id="TIGR00485">
    <property type="entry name" value="EF-Tu"/>
    <property type="match status" value="1"/>
</dbReference>
<dbReference type="NCBIfam" id="NF000766">
    <property type="entry name" value="PRK00049.1"/>
    <property type="match status" value="1"/>
</dbReference>
<dbReference type="NCBIfam" id="NF009372">
    <property type="entry name" value="PRK12735.1"/>
    <property type="match status" value="1"/>
</dbReference>
<dbReference type="NCBIfam" id="NF009373">
    <property type="entry name" value="PRK12736.1"/>
    <property type="match status" value="1"/>
</dbReference>
<dbReference type="NCBIfam" id="TIGR00231">
    <property type="entry name" value="small_GTP"/>
    <property type="match status" value="1"/>
</dbReference>
<dbReference type="PANTHER" id="PTHR43721:SF22">
    <property type="entry name" value="ELONGATION FACTOR TU, MITOCHONDRIAL"/>
    <property type="match status" value="1"/>
</dbReference>
<dbReference type="PANTHER" id="PTHR43721">
    <property type="entry name" value="ELONGATION FACTOR TU-RELATED"/>
    <property type="match status" value="1"/>
</dbReference>
<dbReference type="Pfam" id="PF00009">
    <property type="entry name" value="GTP_EFTU"/>
    <property type="match status" value="1"/>
</dbReference>
<dbReference type="Pfam" id="PF03144">
    <property type="entry name" value="GTP_EFTU_D2"/>
    <property type="match status" value="1"/>
</dbReference>
<dbReference type="Pfam" id="PF03143">
    <property type="entry name" value="GTP_EFTU_D3"/>
    <property type="match status" value="1"/>
</dbReference>
<dbReference type="PRINTS" id="PR00315">
    <property type="entry name" value="ELONGATNFCT"/>
</dbReference>
<dbReference type="SUPFAM" id="SSF50465">
    <property type="entry name" value="EF-Tu/eEF-1alpha/eIF2-gamma C-terminal domain"/>
    <property type="match status" value="1"/>
</dbReference>
<dbReference type="SUPFAM" id="SSF52540">
    <property type="entry name" value="P-loop containing nucleoside triphosphate hydrolases"/>
    <property type="match status" value="1"/>
</dbReference>
<dbReference type="SUPFAM" id="SSF50447">
    <property type="entry name" value="Translation proteins"/>
    <property type="match status" value="1"/>
</dbReference>
<dbReference type="PROSITE" id="PS00301">
    <property type="entry name" value="G_TR_1"/>
    <property type="match status" value="1"/>
</dbReference>
<dbReference type="PROSITE" id="PS51722">
    <property type="entry name" value="G_TR_2"/>
    <property type="match status" value="1"/>
</dbReference>
<feature type="chain" id="PRO_0000337566" description="Elongation factor Tu">
    <location>
        <begin position="1"/>
        <end position="396"/>
    </location>
</feature>
<feature type="domain" description="tr-type G">
    <location>
        <begin position="10"/>
        <end position="206"/>
    </location>
</feature>
<feature type="region of interest" description="G1" evidence="1">
    <location>
        <begin position="19"/>
        <end position="26"/>
    </location>
</feature>
<feature type="region of interest" description="G2" evidence="1">
    <location>
        <begin position="60"/>
        <end position="64"/>
    </location>
</feature>
<feature type="region of interest" description="G3" evidence="1">
    <location>
        <begin position="81"/>
        <end position="84"/>
    </location>
</feature>
<feature type="region of interest" description="G4" evidence="1">
    <location>
        <begin position="136"/>
        <end position="139"/>
    </location>
</feature>
<feature type="region of interest" description="G5" evidence="1">
    <location>
        <begin position="174"/>
        <end position="176"/>
    </location>
</feature>
<feature type="binding site" evidence="2">
    <location>
        <begin position="19"/>
        <end position="26"/>
    </location>
    <ligand>
        <name>GTP</name>
        <dbReference type="ChEBI" id="CHEBI:37565"/>
    </ligand>
</feature>
<feature type="binding site" evidence="2">
    <location>
        <position position="26"/>
    </location>
    <ligand>
        <name>Mg(2+)</name>
        <dbReference type="ChEBI" id="CHEBI:18420"/>
    </ligand>
</feature>
<feature type="binding site" evidence="2">
    <location>
        <begin position="81"/>
        <end position="85"/>
    </location>
    <ligand>
        <name>GTP</name>
        <dbReference type="ChEBI" id="CHEBI:37565"/>
    </ligand>
</feature>
<feature type="binding site" evidence="2">
    <location>
        <begin position="136"/>
        <end position="139"/>
    </location>
    <ligand>
        <name>GTP</name>
        <dbReference type="ChEBI" id="CHEBI:37565"/>
    </ligand>
</feature>
<sequence length="396" mass="43408">MSKEKFERTKPHVNVGTIGHVDHGKTTLTAAITKVMAEVRGGEFKDYADIDNAPEERERGITISTAHVEYESEIRHYAHVDCPGHADYIKNMITGAAQMDGAIIVIAATDGPMAQTREHILLSKQVGVPYIVVYMNKADMVDDEELVELVEMEIRELLDEYDFPGDDTPVIFGSALKALEGDISDIGVPSILKLVDALDSYIPTPKRDTDKSFIMPIEDVFSISGRGTVVTGRIEAGVVNIGDELEIVGIKDTKTTTCTGVEMFRKLLSSGEAGDNVGVLLRGTKREEVERGQVLSKPGSIKPHAKFEAEIYILSKDEGGRHTPFFNNYRPQFYFRTTDVTGACQLPDGIEMVMPGDNVKMRVELLSPIAMEDGLRFAIREGGRTVGAGVVSKVTD</sequence>
<proteinExistence type="inferred from homology"/>
<comment type="function">
    <text evidence="2">GTP hydrolase that promotes the GTP-dependent binding of aminoacyl-tRNA to the A-site of ribosomes during protein biosynthesis.</text>
</comment>
<comment type="catalytic activity">
    <reaction evidence="2">
        <text>GTP + H2O = GDP + phosphate + H(+)</text>
        <dbReference type="Rhea" id="RHEA:19669"/>
        <dbReference type="ChEBI" id="CHEBI:15377"/>
        <dbReference type="ChEBI" id="CHEBI:15378"/>
        <dbReference type="ChEBI" id="CHEBI:37565"/>
        <dbReference type="ChEBI" id="CHEBI:43474"/>
        <dbReference type="ChEBI" id="CHEBI:58189"/>
        <dbReference type="EC" id="3.6.5.3"/>
    </reaction>
    <physiologicalReaction direction="left-to-right" evidence="2">
        <dbReference type="Rhea" id="RHEA:19670"/>
    </physiologicalReaction>
</comment>
<comment type="subunit">
    <text evidence="2">Monomer.</text>
</comment>
<comment type="subcellular location">
    <subcellularLocation>
        <location evidence="2">Cytoplasm</location>
    </subcellularLocation>
</comment>
<comment type="similarity">
    <text evidence="2">Belongs to the TRAFAC class translation factor GTPase superfamily. Classic translation factor GTPase family. EF-Tu/EF-1A subfamily.</text>
</comment>
<keyword id="KW-0963">Cytoplasm</keyword>
<keyword id="KW-0251">Elongation factor</keyword>
<keyword id="KW-0342">GTP-binding</keyword>
<keyword id="KW-0378">Hydrolase</keyword>
<keyword id="KW-0460">Magnesium</keyword>
<keyword id="KW-0479">Metal-binding</keyword>
<keyword id="KW-0547">Nucleotide-binding</keyword>
<keyword id="KW-0648">Protein biosynthesis</keyword>
<keyword id="KW-1185">Reference proteome</keyword>
<accession>A5CW32</accession>
<gene>
    <name evidence="2" type="primary">tuf1</name>
    <name type="synonym">tufA</name>
    <name type="ordered locus">COSY_0167</name>
</gene>
<gene>
    <name evidence="2" type="primary">tuf2</name>
    <name type="synonym">tufB</name>
    <name type="ordered locus">COSY_0744</name>
</gene>
<name>EFTU_VESOH</name>
<organism>
    <name type="scientific">Vesicomyosocius okutanii subsp. Calyptogena okutanii (strain HA)</name>
    <dbReference type="NCBI Taxonomy" id="412965"/>
    <lineage>
        <taxon>Bacteria</taxon>
        <taxon>Pseudomonadati</taxon>
        <taxon>Pseudomonadota</taxon>
        <taxon>Gammaproteobacteria</taxon>
        <taxon>Candidatus Pseudothioglobaceae</taxon>
        <taxon>Candidatus Vesicomyosocius</taxon>
    </lineage>
</organism>
<evidence type="ECO:0000250" key="1"/>
<evidence type="ECO:0000255" key="2">
    <source>
        <dbReference type="HAMAP-Rule" id="MF_00118"/>
    </source>
</evidence>